<gene>
    <name evidence="1" type="primary">aroK</name>
    <name type="ordered locus">XCC2841</name>
</gene>
<sequence>MNPAPNLVMIGPMGAGKSCIGRRLAERFGLDFVDVDQAIVEQVGSSIPAIFEQHGEARFRQHEAEALHGLLAQSNKLVSTGGGAILDAGNRQRIRERGFVVYLHVSVPAQLTRLARDRNRPLLQRPDREQVLHGMAALRTPLYQEVADLTLETDHLSPAEATAQLVLRLAAQWRMSSTPA</sequence>
<protein>
    <recommendedName>
        <fullName evidence="1">Shikimate kinase</fullName>
        <shortName evidence="1">SK</shortName>
        <ecNumber evidence="1">2.7.1.71</ecNumber>
    </recommendedName>
</protein>
<keyword id="KW-0028">Amino-acid biosynthesis</keyword>
<keyword id="KW-0057">Aromatic amino acid biosynthesis</keyword>
<keyword id="KW-0067">ATP-binding</keyword>
<keyword id="KW-0963">Cytoplasm</keyword>
<keyword id="KW-0418">Kinase</keyword>
<keyword id="KW-0460">Magnesium</keyword>
<keyword id="KW-0479">Metal-binding</keyword>
<keyword id="KW-0547">Nucleotide-binding</keyword>
<keyword id="KW-1185">Reference proteome</keyword>
<keyword id="KW-0808">Transferase</keyword>
<proteinExistence type="inferred from homology"/>
<organism>
    <name type="scientific">Xanthomonas campestris pv. campestris (strain ATCC 33913 / DSM 3586 / NCPPB 528 / LMG 568 / P 25)</name>
    <dbReference type="NCBI Taxonomy" id="190485"/>
    <lineage>
        <taxon>Bacteria</taxon>
        <taxon>Pseudomonadati</taxon>
        <taxon>Pseudomonadota</taxon>
        <taxon>Gammaproteobacteria</taxon>
        <taxon>Lysobacterales</taxon>
        <taxon>Lysobacteraceae</taxon>
        <taxon>Xanthomonas</taxon>
    </lineage>
</organism>
<evidence type="ECO:0000255" key="1">
    <source>
        <dbReference type="HAMAP-Rule" id="MF_00109"/>
    </source>
</evidence>
<accession>Q8P6X4</accession>
<feature type="chain" id="PRO_0000237958" description="Shikimate kinase">
    <location>
        <begin position="1"/>
        <end position="180"/>
    </location>
</feature>
<feature type="binding site" evidence="1">
    <location>
        <begin position="14"/>
        <end position="19"/>
    </location>
    <ligand>
        <name>ATP</name>
        <dbReference type="ChEBI" id="CHEBI:30616"/>
    </ligand>
</feature>
<feature type="binding site" evidence="1">
    <location>
        <position position="18"/>
    </location>
    <ligand>
        <name>Mg(2+)</name>
        <dbReference type="ChEBI" id="CHEBI:18420"/>
    </ligand>
</feature>
<feature type="binding site" evidence="1">
    <location>
        <position position="36"/>
    </location>
    <ligand>
        <name>substrate</name>
    </ligand>
</feature>
<feature type="binding site" evidence="1">
    <location>
        <position position="60"/>
    </location>
    <ligand>
        <name>substrate</name>
    </ligand>
</feature>
<feature type="binding site" evidence="1">
    <location>
        <position position="82"/>
    </location>
    <ligand>
        <name>substrate</name>
    </ligand>
</feature>
<feature type="binding site" evidence="1">
    <location>
        <position position="120"/>
    </location>
    <ligand>
        <name>ATP</name>
        <dbReference type="ChEBI" id="CHEBI:30616"/>
    </ligand>
</feature>
<feature type="binding site" evidence="1">
    <location>
        <position position="139"/>
    </location>
    <ligand>
        <name>substrate</name>
    </ligand>
</feature>
<reference key="1">
    <citation type="journal article" date="2002" name="Nature">
        <title>Comparison of the genomes of two Xanthomonas pathogens with differing host specificities.</title>
        <authorList>
            <person name="da Silva A.C.R."/>
            <person name="Ferro J.A."/>
            <person name="Reinach F.C."/>
            <person name="Farah C.S."/>
            <person name="Furlan L.R."/>
            <person name="Quaggio R.B."/>
            <person name="Monteiro-Vitorello C.B."/>
            <person name="Van Sluys M.A."/>
            <person name="Almeida N.F. Jr."/>
            <person name="Alves L.M.C."/>
            <person name="do Amaral A.M."/>
            <person name="Bertolini M.C."/>
            <person name="Camargo L.E.A."/>
            <person name="Camarotte G."/>
            <person name="Cannavan F."/>
            <person name="Cardozo J."/>
            <person name="Chambergo F."/>
            <person name="Ciapina L.P."/>
            <person name="Cicarelli R.M.B."/>
            <person name="Coutinho L.L."/>
            <person name="Cursino-Santos J.R."/>
            <person name="El-Dorry H."/>
            <person name="Faria J.B."/>
            <person name="Ferreira A.J.S."/>
            <person name="Ferreira R.C.C."/>
            <person name="Ferro M.I.T."/>
            <person name="Formighieri E.F."/>
            <person name="Franco M.C."/>
            <person name="Greggio C.C."/>
            <person name="Gruber A."/>
            <person name="Katsuyama A.M."/>
            <person name="Kishi L.T."/>
            <person name="Leite R.P."/>
            <person name="Lemos E.G.M."/>
            <person name="Lemos M.V.F."/>
            <person name="Locali E.C."/>
            <person name="Machado M.A."/>
            <person name="Madeira A.M.B.N."/>
            <person name="Martinez-Rossi N.M."/>
            <person name="Martins E.C."/>
            <person name="Meidanis J."/>
            <person name="Menck C.F.M."/>
            <person name="Miyaki C.Y."/>
            <person name="Moon D.H."/>
            <person name="Moreira L.M."/>
            <person name="Novo M.T.M."/>
            <person name="Okura V.K."/>
            <person name="Oliveira M.C."/>
            <person name="Oliveira V.R."/>
            <person name="Pereira H.A."/>
            <person name="Rossi A."/>
            <person name="Sena J.A.D."/>
            <person name="Silva C."/>
            <person name="de Souza R.F."/>
            <person name="Spinola L.A.F."/>
            <person name="Takita M.A."/>
            <person name="Tamura R.E."/>
            <person name="Teixeira E.C."/>
            <person name="Tezza R.I.D."/>
            <person name="Trindade dos Santos M."/>
            <person name="Truffi D."/>
            <person name="Tsai S.M."/>
            <person name="White F.F."/>
            <person name="Setubal J.C."/>
            <person name="Kitajima J.P."/>
        </authorList>
    </citation>
    <scope>NUCLEOTIDE SEQUENCE [LARGE SCALE GENOMIC DNA]</scope>
    <source>
        <strain>ATCC 33913 / DSM 3586 / NCPPB 528 / LMG 568 / P 25</strain>
    </source>
</reference>
<comment type="function">
    <text evidence="1">Catalyzes the specific phosphorylation of the 3-hydroxyl group of shikimic acid using ATP as a cosubstrate.</text>
</comment>
<comment type="catalytic activity">
    <reaction evidence="1">
        <text>shikimate + ATP = 3-phosphoshikimate + ADP + H(+)</text>
        <dbReference type="Rhea" id="RHEA:13121"/>
        <dbReference type="ChEBI" id="CHEBI:15378"/>
        <dbReference type="ChEBI" id="CHEBI:30616"/>
        <dbReference type="ChEBI" id="CHEBI:36208"/>
        <dbReference type="ChEBI" id="CHEBI:145989"/>
        <dbReference type="ChEBI" id="CHEBI:456216"/>
        <dbReference type="EC" id="2.7.1.71"/>
    </reaction>
</comment>
<comment type="cofactor">
    <cofactor evidence="1">
        <name>Mg(2+)</name>
        <dbReference type="ChEBI" id="CHEBI:18420"/>
    </cofactor>
    <text evidence="1">Binds 1 Mg(2+) ion per subunit.</text>
</comment>
<comment type="pathway">
    <text evidence="1">Metabolic intermediate biosynthesis; chorismate biosynthesis; chorismate from D-erythrose 4-phosphate and phosphoenolpyruvate: step 5/7.</text>
</comment>
<comment type="subunit">
    <text evidence="1">Monomer.</text>
</comment>
<comment type="subcellular location">
    <subcellularLocation>
        <location evidence="1">Cytoplasm</location>
    </subcellularLocation>
</comment>
<comment type="similarity">
    <text evidence="1">Belongs to the shikimate kinase family.</text>
</comment>
<name>AROK_XANCP</name>
<dbReference type="EC" id="2.7.1.71" evidence="1"/>
<dbReference type="EMBL" id="AE008922">
    <property type="protein sequence ID" value="AAM42113.1"/>
    <property type="molecule type" value="Genomic_DNA"/>
</dbReference>
<dbReference type="RefSeq" id="NP_638189.1">
    <property type="nucleotide sequence ID" value="NC_003902.1"/>
</dbReference>
<dbReference type="RefSeq" id="WP_011037966.1">
    <property type="nucleotide sequence ID" value="NC_003902.1"/>
</dbReference>
<dbReference type="SMR" id="Q8P6X4"/>
<dbReference type="STRING" id="190485.XCC2841"/>
<dbReference type="EnsemblBacteria" id="AAM42113">
    <property type="protein sequence ID" value="AAM42113"/>
    <property type="gene ID" value="XCC2841"/>
</dbReference>
<dbReference type="KEGG" id="xcc:XCC2841"/>
<dbReference type="PATRIC" id="fig|190485.4.peg.3040"/>
<dbReference type="eggNOG" id="COG0703">
    <property type="taxonomic scope" value="Bacteria"/>
</dbReference>
<dbReference type="HOGENOM" id="CLU_057607_3_2_6"/>
<dbReference type="OrthoDB" id="9800332at2"/>
<dbReference type="UniPathway" id="UPA00053">
    <property type="reaction ID" value="UER00088"/>
</dbReference>
<dbReference type="Proteomes" id="UP000001010">
    <property type="component" value="Chromosome"/>
</dbReference>
<dbReference type="GO" id="GO:0005829">
    <property type="term" value="C:cytosol"/>
    <property type="evidence" value="ECO:0000318"/>
    <property type="project" value="GO_Central"/>
</dbReference>
<dbReference type="GO" id="GO:0005524">
    <property type="term" value="F:ATP binding"/>
    <property type="evidence" value="ECO:0007669"/>
    <property type="project" value="UniProtKB-UniRule"/>
</dbReference>
<dbReference type="GO" id="GO:0000287">
    <property type="term" value="F:magnesium ion binding"/>
    <property type="evidence" value="ECO:0007669"/>
    <property type="project" value="UniProtKB-UniRule"/>
</dbReference>
<dbReference type="GO" id="GO:0004765">
    <property type="term" value="F:shikimate kinase activity"/>
    <property type="evidence" value="ECO:0000318"/>
    <property type="project" value="GO_Central"/>
</dbReference>
<dbReference type="GO" id="GO:0008652">
    <property type="term" value="P:amino acid biosynthetic process"/>
    <property type="evidence" value="ECO:0007669"/>
    <property type="project" value="UniProtKB-KW"/>
</dbReference>
<dbReference type="GO" id="GO:0009073">
    <property type="term" value="P:aromatic amino acid family biosynthetic process"/>
    <property type="evidence" value="ECO:0007669"/>
    <property type="project" value="UniProtKB-KW"/>
</dbReference>
<dbReference type="GO" id="GO:0009423">
    <property type="term" value="P:chorismate biosynthetic process"/>
    <property type="evidence" value="ECO:0007669"/>
    <property type="project" value="UniProtKB-UniRule"/>
</dbReference>
<dbReference type="CDD" id="cd00464">
    <property type="entry name" value="SK"/>
    <property type="match status" value="1"/>
</dbReference>
<dbReference type="FunFam" id="3.40.50.300:FF:003942">
    <property type="entry name" value="Shikimate kinase"/>
    <property type="match status" value="1"/>
</dbReference>
<dbReference type="Gene3D" id="3.40.50.300">
    <property type="entry name" value="P-loop containing nucleotide triphosphate hydrolases"/>
    <property type="match status" value="1"/>
</dbReference>
<dbReference type="HAMAP" id="MF_00109">
    <property type="entry name" value="Shikimate_kinase"/>
    <property type="match status" value="1"/>
</dbReference>
<dbReference type="InterPro" id="IPR027417">
    <property type="entry name" value="P-loop_NTPase"/>
</dbReference>
<dbReference type="InterPro" id="IPR031322">
    <property type="entry name" value="Shikimate/glucono_kinase"/>
</dbReference>
<dbReference type="InterPro" id="IPR000623">
    <property type="entry name" value="Shikimate_kinase/TSH1"/>
</dbReference>
<dbReference type="InterPro" id="IPR023000">
    <property type="entry name" value="Shikimate_kinase_CS"/>
</dbReference>
<dbReference type="PANTHER" id="PTHR21087">
    <property type="entry name" value="SHIKIMATE KINASE"/>
    <property type="match status" value="1"/>
</dbReference>
<dbReference type="PANTHER" id="PTHR21087:SF16">
    <property type="entry name" value="SHIKIMATE KINASE 1, CHLOROPLASTIC"/>
    <property type="match status" value="1"/>
</dbReference>
<dbReference type="Pfam" id="PF01202">
    <property type="entry name" value="SKI"/>
    <property type="match status" value="1"/>
</dbReference>
<dbReference type="PRINTS" id="PR01100">
    <property type="entry name" value="SHIKIMTKNASE"/>
</dbReference>
<dbReference type="SUPFAM" id="SSF52540">
    <property type="entry name" value="P-loop containing nucleoside triphosphate hydrolases"/>
    <property type="match status" value="1"/>
</dbReference>
<dbReference type="PROSITE" id="PS01128">
    <property type="entry name" value="SHIKIMATE_KINASE"/>
    <property type="match status" value="1"/>
</dbReference>